<accession>P22477</accession>
<accession>D3G0F5</accession>
<evidence type="ECO:0000255" key="1">
    <source>
        <dbReference type="HAMAP-Rule" id="MF_01346"/>
    </source>
</evidence>
<evidence type="ECO:0000256" key="2">
    <source>
        <dbReference type="SAM" id="MobiDB-lite"/>
    </source>
</evidence>
<protein>
    <recommendedName>
        <fullName evidence="1">ATP synthase subunit alpha</fullName>
        <ecNumber evidence="1">7.1.2.2</ecNumber>
    </recommendedName>
    <alternativeName>
        <fullName evidence="1">ATP synthase F1 sector subunit alpha</fullName>
    </alternativeName>
    <alternativeName>
        <fullName evidence="1">F-ATPase subunit alpha</fullName>
    </alternativeName>
</protein>
<comment type="function">
    <text>Produces ATP from ADP in the presence of a proton gradient across the membrane. The alpha chain is a regulatory subunit.</text>
</comment>
<comment type="catalytic activity">
    <reaction evidence="1">
        <text>ATP + H2O + 4 H(+)(in) = ADP + phosphate + 5 H(+)(out)</text>
        <dbReference type="Rhea" id="RHEA:57720"/>
        <dbReference type="ChEBI" id="CHEBI:15377"/>
        <dbReference type="ChEBI" id="CHEBI:15378"/>
        <dbReference type="ChEBI" id="CHEBI:30616"/>
        <dbReference type="ChEBI" id="CHEBI:43474"/>
        <dbReference type="ChEBI" id="CHEBI:456216"/>
        <dbReference type="EC" id="7.1.2.2"/>
    </reaction>
</comment>
<comment type="subunit">
    <text evidence="1">F-type ATPases have 2 components, CF(1) - the catalytic core - and CF(0) - the membrane proton channel. CF(1) has five subunits: alpha(3), beta(3), gamma(1), delta(1), epsilon(1). CF(0) has three main subunits: a(1), b(2) and c(9-12). The alpha and beta chains form an alternating ring which encloses part of the gamma chain. CF(1) is attached to CF(0) by a central stalk formed by the gamma and epsilon chains, while a peripheral stalk is formed by the delta and b chains.</text>
</comment>
<comment type="subcellular location">
    <subcellularLocation>
        <location evidence="1">Cell membrane</location>
        <topology evidence="1">Peripheral membrane protein</topology>
    </subcellularLocation>
</comment>
<comment type="similarity">
    <text evidence="1">Belongs to the ATPase alpha/beta chains family.</text>
</comment>
<name>ATPA_ALKPO</name>
<dbReference type="EC" id="7.1.2.2" evidence="1"/>
<dbReference type="EMBL" id="AF330160">
    <property type="protein sequence ID" value="AAG48361.1"/>
    <property type="molecule type" value="Genomic_DNA"/>
</dbReference>
<dbReference type="EMBL" id="CP001878">
    <property type="protein sequence ID" value="ADC49430.1"/>
    <property type="molecule type" value="Genomic_DNA"/>
</dbReference>
<dbReference type="RefSeq" id="WP_012960703.1">
    <property type="nucleotide sequence ID" value="NC_013791.2"/>
</dbReference>
<dbReference type="SMR" id="P22477"/>
<dbReference type="STRING" id="398511.BpOF4_06860"/>
<dbReference type="KEGG" id="bpf:BpOF4_06860"/>
<dbReference type="eggNOG" id="COG0056">
    <property type="taxonomic scope" value="Bacteria"/>
</dbReference>
<dbReference type="HOGENOM" id="CLU_010091_2_1_9"/>
<dbReference type="Proteomes" id="UP000001544">
    <property type="component" value="Chromosome"/>
</dbReference>
<dbReference type="GO" id="GO:0005886">
    <property type="term" value="C:plasma membrane"/>
    <property type="evidence" value="ECO:0007669"/>
    <property type="project" value="UniProtKB-SubCell"/>
</dbReference>
<dbReference type="GO" id="GO:0045259">
    <property type="term" value="C:proton-transporting ATP synthase complex"/>
    <property type="evidence" value="ECO:0007669"/>
    <property type="project" value="UniProtKB-KW"/>
</dbReference>
<dbReference type="GO" id="GO:0043531">
    <property type="term" value="F:ADP binding"/>
    <property type="evidence" value="ECO:0007669"/>
    <property type="project" value="TreeGrafter"/>
</dbReference>
<dbReference type="GO" id="GO:0005524">
    <property type="term" value="F:ATP binding"/>
    <property type="evidence" value="ECO:0007669"/>
    <property type="project" value="UniProtKB-UniRule"/>
</dbReference>
<dbReference type="GO" id="GO:0046933">
    <property type="term" value="F:proton-transporting ATP synthase activity, rotational mechanism"/>
    <property type="evidence" value="ECO:0007669"/>
    <property type="project" value="UniProtKB-UniRule"/>
</dbReference>
<dbReference type="CDD" id="cd18113">
    <property type="entry name" value="ATP-synt_F1_alpha_C"/>
    <property type="match status" value="1"/>
</dbReference>
<dbReference type="CDD" id="cd18116">
    <property type="entry name" value="ATP-synt_F1_alpha_N"/>
    <property type="match status" value="1"/>
</dbReference>
<dbReference type="CDD" id="cd01132">
    <property type="entry name" value="F1-ATPase_alpha_CD"/>
    <property type="match status" value="1"/>
</dbReference>
<dbReference type="FunFam" id="1.20.150.20:FF:000001">
    <property type="entry name" value="ATP synthase subunit alpha"/>
    <property type="match status" value="1"/>
</dbReference>
<dbReference type="FunFam" id="2.40.30.20:FF:000001">
    <property type="entry name" value="ATP synthase subunit alpha"/>
    <property type="match status" value="1"/>
</dbReference>
<dbReference type="FunFam" id="3.40.50.300:FF:000002">
    <property type="entry name" value="ATP synthase subunit alpha"/>
    <property type="match status" value="1"/>
</dbReference>
<dbReference type="Gene3D" id="2.40.30.20">
    <property type="match status" value="1"/>
</dbReference>
<dbReference type="Gene3D" id="1.20.150.20">
    <property type="entry name" value="ATP synthase alpha/beta chain, C-terminal domain"/>
    <property type="match status" value="1"/>
</dbReference>
<dbReference type="Gene3D" id="3.40.50.300">
    <property type="entry name" value="P-loop containing nucleotide triphosphate hydrolases"/>
    <property type="match status" value="1"/>
</dbReference>
<dbReference type="HAMAP" id="MF_01346">
    <property type="entry name" value="ATP_synth_alpha_bact"/>
    <property type="match status" value="1"/>
</dbReference>
<dbReference type="InterPro" id="IPR023366">
    <property type="entry name" value="ATP_synth_asu-like_sf"/>
</dbReference>
<dbReference type="InterPro" id="IPR000793">
    <property type="entry name" value="ATP_synth_asu_C"/>
</dbReference>
<dbReference type="InterPro" id="IPR038376">
    <property type="entry name" value="ATP_synth_asu_C_sf"/>
</dbReference>
<dbReference type="InterPro" id="IPR033732">
    <property type="entry name" value="ATP_synth_F1_a_nt-bd_dom"/>
</dbReference>
<dbReference type="InterPro" id="IPR005294">
    <property type="entry name" value="ATP_synth_F1_asu"/>
</dbReference>
<dbReference type="InterPro" id="IPR020003">
    <property type="entry name" value="ATPase_a/bsu_AS"/>
</dbReference>
<dbReference type="InterPro" id="IPR004100">
    <property type="entry name" value="ATPase_F1/V1/A1_a/bsu_N"/>
</dbReference>
<dbReference type="InterPro" id="IPR036121">
    <property type="entry name" value="ATPase_F1/V1/A1_a/bsu_N_sf"/>
</dbReference>
<dbReference type="InterPro" id="IPR000194">
    <property type="entry name" value="ATPase_F1/V1/A1_a/bsu_nucl-bd"/>
</dbReference>
<dbReference type="InterPro" id="IPR027417">
    <property type="entry name" value="P-loop_NTPase"/>
</dbReference>
<dbReference type="NCBIfam" id="TIGR00962">
    <property type="entry name" value="atpA"/>
    <property type="match status" value="1"/>
</dbReference>
<dbReference type="NCBIfam" id="NF009884">
    <property type="entry name" value="PRK13343.1"/>
    <property type="match status" value="1"/>
</dbReference>
<dbReference type="PANTHER" id="PTHR48082">
    <property type="entry name" value="ATP SYNTHASE SUBUNIT ALPHA, MITOCHONDRIAL"/>
    <property type="match status" value="1"/>
</dbReference>
<dbReference type="PANTHER" id="PTHR48082:SF2">
    <property type="entry name" value="ATP SYNTHASE SUBUNIT ALPHA, MITOCHONDRIAL"/>
    <property type="match status" value="1"/>
</dbReference>
<dbReference type="Pfam" id="PF00006">
    <property type="entry name" value="ATP-synt_ab"/>
    <property type="match status" value="1"/>
</dbReference>
<dbReference type="Pfam" id="PF00306">
    <property type="entry name" value="ATP-synt_ab_C"/>
    <property type="match status" value="1"/>
</dbReference>
<dbReference type="Pfam" id="PF02874">
    <property type="entry name" value="ATP-synt_ab_N"/>
    <property type="match status" value="1"/>
</dbReference>
<dbReference type="PIRSF" id="PIRSF039088">
    <property type="entry name" value="F_ATPase_subunit_alpha"/>
    <property type="match status" value="1"/>
</dbReference>
<dbReference type="SUPFAM" id="SSF47917">
    <property type="entry name" value="C-terminal domain of alpha and beta subunits of F1 ATP synthase"/>
    <property type="match status" value="1"/>
</dbReference>
<dbReference type="SUPFAM" id="SSF50615">
    <property type="entry name" value="N-terminal domain of alpha and beta subunits of F1 ATP synthase"/>
    <property type="match status" value="1"/>
</dbReference>
<dbReference type="SUPFAM" id="SSF52540">
    <property type="entry name" value="P-loop containing nucleoside triphosphate hydrolases"/>
    <property type="match status" value="1"/>
</dbReference>
<dbReference type="PROSITE" id="PS00152">
    <property type="entry name" value="ATPASE_ALPHA_BETA"/>
    <property type="match status" value="1"/>
</dbReference>
<reference key="1">
    <citation type="journal article" date="1991" name="Mol. Gen. Genet.">
        <title>Organization and nucleotide sequence of the atp genes encoding the ATP synthase from alkaliphilic Bacillus firmus OF4.</title>
        <authorList>
            <person name="Ivey D.M."/>
            <person name="Krulwich T.A."/>
        </authorList>
    </citation>
    <scope>NUCLEOTIDE SEQUENCE [GENOMIC DNA]</scope>
</reference>
<reference key="2">
    <citation type="submission" date="2000-12" db="EMBL/GenBank/DDBJ databases">
        <authorList>
            <person name="Hicks D."/>
            <person name="Krulwich T.A."/>
        </authorList>
    </citation>
    <scope>SEQUENCE REVISION</scope>
</reference>
<reference key="3">
    <citation type="journal article" date="2011" name="Environ. Microbiol.">
        <title>Genome of alkaliphilic Bacillus pseudofirmus OF4 reveals adaptations that support the ability to grow in an external pH range from 7.5 to 11.4.</title>
        <authorList>
            <person name="Janto B."/>
            <person name="Ahmed A."/>
            <person name="Ito M."/>
            <person name="Liu J."/>
            <person name="Hicks D.B."/>
            <person name="Pagni S."/>
            <person name="Fackelmayer O.J."/>
            <person name="Smith T.A."/>
            <person name="Earl J."/>
            <person name="Elbourne L.D."/>
            <person name="Hassan K."/>
            <person name="Paulsen I.T."/>
            <person name="Kolsto A.B."/>
            <person name="Tourasse N.J."/>
            <person name="Ehrlich G.D."/>
            <person name="Boissy R."/>
            <person name="Ivey D.M."/>
            <person name="Li G."/>
            <person name="Xue Y."/>
            <person name="Ma Y."/>
            <person name="Hu F.Z."/>
            <person name="Krulwich T.A."/>
        </authorList>
    </citation>
    <scope>NUCLEOTIDE SEQUENCE [LARGE SCALE GENOMIC DNA]</scope>
    <source>
        <strain>ATCC BAA-2126 / JCM 17055 / OF4</strain>
    </source>
</reference>
<keyword id="KW-0066">ATP synthesis</keyword>
<keyword id="KW-0067">ATP-binding</keyword>
<keyword id="KW-1003">Cell membrane</keyword>
<keyword id="KW-0139">CF(1)</keyword>
<keyword id="KW-0375">Hydrogen ion transport</keyword>
<keyword id="KW-0406">Ion transport</keyword>
<keyword id="KW-0472">Membrane</keyword>
<keyword id="KW-0547">Nucleotide-binding</keyword>
<keyword id="KW-1185">Reference proteome</keyword>
<keyword id="KW-1278">Translocase</keyword>
<keyword id="KW-0813">Transport</keyword>
<proteinExistence type="inferred from homology"/>
<sequence length="502" mass="54677">MSIKPEEISSLIKQQIESFQSDVQVQDVGTVIRVGDGIALAHGLENVMAGELLEFSNGVMGMAQNLEENNIGIIILGPYTDIREGDEVKRTGRIMEVPVGEELLGRVVNPLGQPIDGLGPIATTKSRPIESPAPGVMDRKSVHEPLQTGIKSIDTMIPIGRGQRELIIGDRQTGKTAIAIDTILNQKDEDMICIYVAIGQKDSTVAGVVETLRQRGALDYTIVVSASASDPAPMLFLAPYAGVSMGEEFMYNGKHVLVIYDDLSKQASAYRELSLLLRRPPGREAFPGDVFYLHSRLLERAAKLSDAKGGGSITALPFIETQAGDVSAYIPTNVISITDGQIFLQSDLFYSGIRPAVNAGLSVSRVGGSAQIKAMKKVSGTLRLDLAAYRELEAFAQFGSDLDKATQAKLNRGQRTVEVLKQDLHNPLPVEKQVAIIYALTKGFMDDIPVEDVQRFESEFFTFLDHNKKDLLDHIRTTGNLPEDADFKAAIEEFKKGFSASK</sequence>
<feature type="chain" id="PRO_0000144317" description="ATP synthase subunit alpha">
    <location>
        <begin position="1"/>
        <end position="502"/>
    </location>
</feature>
<feature type="region of interest" description="Disordered" evidence="2">
    <location>
        <begin position="119"/>
        <end position="139"/>
    </location>
</feature>
<feature type="binding site" evidence="1">
    <location>
        <begin position="169"/>
        <end position="176"/>
    </location>
    <ligand>
        <name>ATP</name>
        <dbReference type="ChEBI" id="CHEBI:30616"/>
    </ligand>
</feature>
<feature type="site" description="Required for activity" evidence="1">
    <location>
        <position position="362"/>
    </location>
</feature>
<organism>
    <name type="scientific">Alkalihalophilus pseudofirmus (strain ATCC BAA-2126 / JCM 17055 / OF4)</name>
    <name type="common">Bacillus pseudofirmus</name>
    <dbReference type="NCBI Taxonomy" id="398511"/>
    <lineage>
        <taxon>Bacteria</taxon>
        <taxon>Bacillati</taxon>
        <taxon>Bacillota</taxon>
        <taxon>Bacilli</taxon>
        <taxon>Bacillales</taxon>
        <taxon>Bacillaceae</taxon>
        <taxon>Alkalihalophilus</taxon>
    </lineage>
</organism>
<gene>
    <name evidence="1" type="primary">atpA</name>
    <name type="ordered locus">BpOF4_06860</name>
</gene>